<accession>Q8PX74</accession>
<reference key="1">
    <citation type="journal article" date="2002" name="J. Mol. Microbiol. Biotechnol.">
        <title>The genome of Methanosarcina mazei: evidence for lateral gene transfer between Bacteria and Archaea.</title>
        <authorList>
            <person name="Deppenmeier U."/>
            <person name="Johann A."/>
            <person name="Hartsch T."/>
            <person name="Merkl R."/>
            <person name="Schmitz R.A."/>
            <person name="Martinez-Arias R."/>
            <person name="Henne A."/>
            <person name="Wiezer A."/>
            <person name="Baeumer S."/>
            <person name="Jacobi C."/>
            <person name="Brueggemann H."/>
            <person name="Lienard T."/>
            <person name="Christmann A."/>
            <person name="Boemecke M."/>
            <person name="Steckel S."/>
            <person name="Bhattacharyya A."/>
            <person name="Lykidis A."/>
            <person name="Overbeek R."/>
            <person name="Klenk H.-P."/>
            <person name="Gunsalus R.P."/>
            <person name="Fritz H.-J."/>
            <person name="Gottschalk G."/>
        </authorList>
    </citation>
    <scope>NUCLEOTIDE SEQUENCE [LARGE SCALE GENOMIC DNA]</scope>
    <source>
        <strain>ATCC BAA-159 / DSM 3647 / Goe1 / Go1 / JCM 11833 / OCM 88</strain>
    </source>
</reference>
<evidence type="ECO:0000255" key="1">
    <source>
        <dbReference type="HAMAP-Rule" id="MF_00123"/>
    </source>
</evidence>
<proteinExistence type="inferred from homology"/>
<name>SYR_METMA</name>
<comment type="catalytic activity">
    <reaction evidence="1">
        <text>tRNA(Arg) + L-arginine + ATP = L-arginyl-tRNA(Arg) + AMP + diphosphate</text>
        <dbReference type="Rhea" id="RHEA:20301"/>
        <dbReference type="Rhea" id="RHEA-COMP:9658"/>
        <dbReference type="Rhea" id="RHEA-COMP:9673"/>
        <dbReference type="ChEBI" id="CHEBI:30616"/>
        <dbReference type="ChEBI" id="CHEBI:32682"/>
        <dbReference type="ChEBI" id="CHEBI:33019"/>
        <dbReference type="ChEBI" id="CHEBI:78442"/>
        <dbReference type="ChEBI" id="CHEBI:78513"/>
        <dbReference type="ChEBI" id="CHEBI:456215"/>
        <dbReference type="EC" id="6.1.1.19"/>
    </reaction>
</comment>
<comment type="subcellular location">
    <subcellularLocation>
        <location evidence="1">Cytoplasm</location>
    </subcellularLocation>
</comment>
<comment type="similarity">
    <text evidence="1">Belongs to the class-I aminoacyl-tRNA synthetase family.</text>
</comment>
<sequence length="569" mass="63055">MFLELKAQATSILKEAIRKAGFEVEDSELQFETSPHADLASRAAFRLAGIHRQNPKDLASRIVSAVEIPEGSFIGKVSAAGPYINFFAGKHYLNGTVNAVLKEKEKFGCGAPKDRILLEHTSANPNGPLHVGHIRNSIIGDTLARILRRAGYDVEVQYYVNDMGRQIAVVSWACERFELDLSRKSDSAIADVYIKANVELDKNPGYIKEIDALMEKVEAGDVRTIEHFDKAVSLAVAGIKETLLRLNVAHDKFVSESTFLKSGAVHDIVERIKATGRTKTDKGALVVDLSDYGFEKTLVIQRSNGTSLYTTRDLAYHEWKAGQADRIIDVFGADHKLISGQLRATLNAIGVKEPEVVIFEFVSLPEGSMSTRRGQFISADDLFDRVTGAAFEQVETRRPETSYEFKKQVAEAVGLGAVRYDIVRVSPEKSTVFNWKEALDFEKQGAPYIQYSHARACSILEKAKEEAAWNPDKEIDPSLLVEDSEIDLIKKMAMFDSVIDLGARELKPHVLAIYARELADAFNQFYRFVPVIAAEDENVRAARLALVDCARVVLANSLDTLGIIAPESM</sequence>
<protein>
    <recommendedName>
        <fullName evidence="1">Arginine--tRNA ligase</fullName>
        <ecNumber evidence="1">6.1.1.19</ecNumber>
    </recommendedName>
    <alternativeName>
        <fullName evidence="1">Arginyl-tRNA synthetase</fullName>
        <shortName evidence="1">ArgRS</shortName>
    </alternativeName>
</protein>
<dbReference type="EC" id="6.1.1.19" evidence="1"/>
<dbReference type="EMBL" id="AE008384">
    <property type="protein sequence ID" value="AAM31044.1"/>
    <property type="molecule type" value="Genomic_DNA"/>
</dbReference>
<dbReference type="RefSeq" id="WP_011033294.1">
    <property type="nucleotide sequence ID" value="NC_003901.1"/>
</dbReference>
<dbReference type="SMR" id="Q8PX74"/>
<dbReference type="GeneID" id="82160389"/>
<dbReference type="KEGG" id="mma:MM_1348"/>
<dbReference type="PATRIC" id="fig|192952.21.peg.1562"/>
<dbReference type="eggNOG" id="arCOG00487">
    <property type="taxonomic scope" value="Archaea"/>
</dbReference>
<dbReference type="HOGENOM" id="CLU_006406_6_1_2"/>
<dbReference type="Proteomes" id="UP000000595">
    <property type="component" value="Chromosome"/>
</dbReference>
<dbReference type="GO" id="GO:0005737">
    <property type="term" value="C:cytoplasm"/>
    <property type="evidence" value="ECO:0007669"/>
    <property type="project" value="UniProtKB-SubCell"/>
</dbReference>
<dbReference type="GO" id="GO:0004814">
    <property type="term" value="F:arginine-tRNA ligase activity"/>
    <property type="evidence" value="ECO:0007669"/>
    <property type="project" value="UniProtKB-UniRule"/>
</dbReference>
<dbReference type="GO" id="GO:0005524">
    <property type="term" value="F:ATP binding"/>
    <property type="evidence" value="ECO:0007669"/>
    <property type="project" value="UniProtKB-UniRule"/>
</dbReference>
<dbReference type="GO" id="GO:0006420">
    <property type="term" value="P:arginyl-tRNA aminoacylation"/>
    <property type="evidence" value="ECO:0007669"/>
    <property type="project" value="UniProtKB-UniRule"/>
</dbReference>
<dbReference type="CDD" id="cd07956">
    <property type="entry name" value="Anticodon_Ia_Arg"/>
    <property type="match status" value="1"/>
</dbReference>
<dbReference type="CDD" id="cd00671">
    <property type="entry name" value="ArgRS_core"/>
    <property type="match status" value="1"/>
</dbReference>
<dbReference type="FunFam" id="1.10.730.10:FF:000077">
    <property type="entry name" value="Arginine--tRNA ligase"/>
    <property type="match status" value="1"/>
</dbReference>
<dbReference type="FunFam" id="3.40.50.620:FF:000190">
    <property type="entry name" value="Arginine--tRNA ligase"/>
    <property type="match status" value="1"/>
</dbReference>
<dbReference type="Gene3D" id="3.30.1360.70">
    <property type="entry name" value="Arginyl tRNA synthetase N-terminal domain"/>
    <property type="match status" value="1"/>
</dbReference>
<dbReference type="Gene3D" id="3.40.50.620">
    <property type="entry name" value="HUPs"/>
    <property type="match status" value="1"/>
</dbReference>
<dbReference type="Gene3D" id="1.10.730.10">
    <property type="entry name" value="Isoleucyl-tRNA Synthetase, Domain 1"/>
    <property type="match status" value="1"/>
</dbReference>
<dbReference type="HAMAP" id="MF_00123">
    <property type="entry name" value="Arg_tRNA_synth"/>
    <property type="match status" value="1"/>
</dbReference>
<dbReference type="InterPro" id="IPR001412">
    <property type="entry name" value="aa-tRNA-synth_I_CS"/>
</dbReference>
<dbReference type="InterPro" id="IPR001278">
    <property type="entry name" value="Arg-tRNA-ligase"/>
</dbReference>
<dbReference type="InterPro" id="IPR005148">
    <property type="entry name" value="Arg-tRNA-synth_N"/>
</dbReference>
<dbReference type="InterPro" id="IPR036695">
    <property type="entry name" value="Arg-tRNA-synth_N_sf"/>
</dbReference>
<dbReference type="InterPro" id="IPR035684">
    <property type="entry name" value="ArgRS_core"/>
</dbReference>
<dbReference type="InterPro" id="IPR008909">
    <property type="entry name" value="DALR_anticod-bd"/>
</dbReference>
<dbReference type="InterPro" id="IPR014729">
    <property type="entry name" value="Rossmann-like_a/b/a_fold"/>
</dbReference>
<dbReference type="InterPro" id="IPR009080">
    <property type="entry name" value="tRNAsynth_Ia_anticodon-bd"/>
</dbReference>
<dbReference type="NCBIfam" id="TIGR00456">
    <property type="entry name" value="argS"/>
    <property type="match status" value="1"/>
</dbReference>
<dbReference type="PANTHER" id="PTHR11956:SF5">
    <property type="entry name" value="ARGININE--TRNA LIGASE, CYTOPLASMIC"/>
    <property type="match status" value="1"/>
</dbReference>
<dbReference type="PANTHER" id="PTHR11956">
    <property type="entry name" value="ARGINYL-TRNA SYNTHETASE"/>
    <property type="match status" value="1"/>
</dbReference>
<dbReference type="Pfam" id="PF03485">
    <property type="entry name" value="Arg_tRNA_synt_N"/>
    <property type="match status" value="1"/>
</dbReference>
<dbReference type="Pfam" id="PF05746">
    <property type="entry name" value="DALR_1"/>
    <property type="match status" value="1"/>
</dbReference>
<dbReference type="Pfam" id="PF00750">
    <property type="entry name" value="tRNA-synt_1d"/>
    <property type="match status" value="1"/>
</dbReference>
<dbReference type="PRINTS" id="PR01038">
    <property type="entry name" value="TRNASYNTHARG"/>
</dbReference>
<dbReference type="SMART" id="SM01016">
    <property type="entry name" value="Arg_tRNA_synt_N"/>
    <property type="match status" value="1"/>
</dbReference>
<dbReference type="SMART" id="SM00836">
    <property type="entry name" value="DALR_1"/>
    <property type="match status" value="1"/>
</dbReference>
<dbReference type="SUPFAM" id="SSF47323">
    <property type="entry name" value="Anticodon-binding domain of a subclass of class I aminoacyl-tRNA synthetases"/>
    <property type="match status" value="1"/>
</dbReference>
<dbReference type="SUPFAM" id="SSF55190">
    <property type="entry name" value="Arginyl-tRNA synthetase (ArgRS), N-terminal 'additional' domain"/>
    <property type="match status" value="1"/>
</dbReference>
<dbReference type="SUPFAM" id="SSF52374">
    <property type="entry name" value="Nucleotidylyl transferase"/>
    <property type="match status" value="1"/>
</dbReference>
<dbReference type="PROSITE" id="PS00178">
    <property type="entry name" value="AA_TRNA_LIGASE_I"/>
    <property type="match status" value="1"/>
</dbReference>
<gene>
    <name evidence="1" type="primary">argS</name>
    <name type="ordered locus">MM_1348</name>
</gene>
<organism>
    <name type="scientific">Methanosarcina mazei (strain ATCC BAA-159 / DSM 3647 / Goe1 / Go1 / JCM 11833 / OCM 88)</name>
    <name type="common">Methanosarcina frisia</name>
    <dbReference type="NCBI Taxonomy" id="192952"/>
    <lineage>
        <taxon>Archaea</taxon>
        <taxon>Methanobacteriati</taxon>
        <taxon>Methanobacteriota</taxon>
        <taxon>Stenosarchaea group</taxon>
        <taxon>Methanomicrobia</taxon>
        <taxon>Methanosarcinales</taxon>
        <taxon>Methanosarcinaceae</taxon>
        <taxon>Methanosarcina</taxon>
    </lineage>
</organism>
<feature type="chain" id="PRO_0000151648" description="Arginine--tRNA ligase">
    <location>
        <begin position="1"/>
        <end position="569"/>
    </location>
</feature>
<feature type="short sequence motif" description="'HIGH' region">
    <location>
        <begin position="123"/>
        <end position="133"/>
    </location>
</feature>
<keyword id="KW-0030">Aminoacyl-tRNA synthetase</keyword>
<keyword id="KW-0067">ATP-binding</keyword>
<keyword id="KW-0963">Cytoplasm</keyword>
<keyword id="KW-0436">Ligase</keyword>
<keyword id="KW-0547">Nucleotide-binding</keyword>
<keyword id="KW-0648">Protein biosynthesis</keyword>